<dbReference type="EC" id="1.14.15.-" evidence="2"/>
<dbReference type="EMBL" id="AF210843">
    <property type="protein sequence ID" value="AAF26924.1"/>
    <property type="molecule type" value="Genomic_DNA"/>
</dbReference>
<dbReference type="EMBL" id="AF217189">
    <property type="protein sequence ID" value="AAF62886.1"/>
    <property type="molecule type" value="Genomic_DNA"/>
</dbReference>
<dbReference type="PDB" id="1PKF">
    <property type="method" value="X-ray"/>
    <property type="resolution" value="2.10 A"/>
    <property type="chains" value="A=1-419"/>
</dbReference>
<dbReference type="PDB" id="1Q5D">
    <property type="method" value="X-ray"/>
    <property type="resolution" value="1.93 A"/>
    <property type="chains" value="A=1-419"/>
</dbReference>
<dbReference type="PDB" id="1Q5E">
    <property type="method" value="X-ray"/>
    <property type="resolution" value="2.65 A"/>
    <property type="chains" value="A=1-419"/>
</dbReference>
<dbReference type="PDBsum" id="1PKF"/>
<dbReference type="PDBsum" id="1Q5D"/>
<dbReference type="PDBsum" id="1Q5E"/>
<dbReference type="SMR" id="Q9KIZ4"/>
<dbReference type="KEGG" id="ag:AAF62886"/>
<dbReference type="UniPathway" id="UPA00774"/>
<dbReference type="EvolutionaryTrace" id="Q9KIZ4"/>
<dbReference type="GO" id="GO:0020037">
    <property type="term" value="F:heme binding"/>
    <property type="evidence" value="ECO:0007669"/>
    <property type="project" value="InterPro"/>
</dbReference>
<dbReference type="GO" id="GO:0005506">
    <property type="term" value="F:iron ion binding"/>
    <property type="evidence" value="ECO:0007669"/>
    <property type="project" value="InterPro"/>
</dbReference>
<dbReference type="GO" id="GO:0004497">
    <property type="term" value="F:monooxygenase activity"/>
    <property type="evidence" value="ECO:0007669"/>
    <property type="project" value="UniProtKB-KW"/>
</dbReference>
<dbReference type="GO" id="GO:0016705">
    <property type="term" value="F:oxidoreductase activity, acting on paired donors, with incorporation or reduction of molecular oxygen"/>
    <property type="evidence" value="ECO:0000303"/>
    <property type="project" value="UniProtKB"/>
</dbReference>
<dbReference type="GO" id="GO:0050814">
    <property type="term" value="P:epothilone biosynthetic process"/>
    <property type="evidence" value="ECO:0000314"/>
    <property type="project" value="UniProtKB"/>
</dbReference>
<dbReference type="CDD" id="cd20630">
    <property type="entry name" value="P450_epoK-like"/>
    <property type="match status" value="1"/>
</dbReference>
<dbReference type="FunFam" id="1.10.630.10:FF:000018">
    <property type="entry name" value="Cytochrome P450 monooxygenase"/>
    <property type="match status" value="1"/>
</dbReference>
<dbReference type="Gene3D" id="1.10.630.10">
    <property type="entry name" value="Cytochrome P450"/>
    <property type="match status" value="1"/>
</dbReference>
<dbReference type="InterPro" id="IPR001128">
    <property type="entry name" value="Cyt_P450"/>
</dbReference>
<dbReference type="InterPro" id="IPR002397">
    <property type="entry name" value="Cyt_P450_B"/>
</dbReference>
<dbReference type="InterPro" id="IPR036396">
    <property type="entry name" value="Cyt_P450_sf"/>
</dbReference>
<dbReference type="PANTHER" id="PTHR46696:SF1">
    <property type="entry name" value="CYTOCHROME P450 YJIB-RELATED"/>
    <property type="match status" value="1"/>
</dbReference>
<dbReference type="PANTHER" id="PTHR46696">
    <property type="entry name" value="P450, PUTATIVE (EUROFUNG)-RELATED"/>
    <property type="match status" value="1"/>
</dbReference>
<dbReference type="Pfam" id="PF00067">
    <property type="entry name" value="p450"/>
    <property type="match status" value="1"/>
</dbReference>
<dbReference type="PRINTS" id="PR00359">
    <property type="entry name" value="BP450"/>
</dbReference>
<dbReference type="PRINTS" id="PR00385">
    <property type="entry name" value="P450"/>
</dbReference>
<dbReference type="SUPFAM" id="SSF48264">
    <property type="entry name" value="Cytochrome P450"/>
    <property type="match status" value="1"/>
</dbReference>
<evidence type="ECO:0000255" key="1">
    <source>
        <dbReference type="RuleBase" id="RU000461"/>
    </source>
</evidence>
<evidence type="ECO:0000269" key="2">
    <source>
    </source>
</evidence>
<evidence type="ECO:0000269" key="3">
    <source>
    </source>
</evidence>
<evidence type="ECO:0000303" key="4">
    <source>
    </source>
</evidence>
<evidence type="ECO:0000303" key="5">
    <source>
    </source>
</evidence>
<evidence type="ECO:0000305" key="6"/>
<evidence type="ECO:0000312" key="7">
    <source>
        <dbReference type="EMBL" id="AAF26924.1"/>
    </source>
</evidence>
<evidence type="ECO:0000312" key="8">
    <source>
        <dbReference type="EMBL" id="AAF62886.1"/>
    </source>
</evidence>
<evidence type="ECO:0007829" key="9">
    <source>
        <dbReference type="PDB" id="1PKF"/>
    </source>
</evidence>
<evidence type="ECO:0007829" key="10">
    <source>
        <dbReference type="PDB" id="1Q5D"/>
    </source>
</evidence>
<name>C167_SORCE</name>
<keyword id="KW-0002">3D-structure</keyword>
<keyword id="KW-0349">Heme</keyword>
<keyword id="KW-0408">Iron</keyword>
<keyword id="KW-0479">Metal-binding</keyword>
<keyword id="KW-0503">Monooxygenase</keyword>
<keyword id="KW-0560">Oxidoreductase</keyword>
<comment type="function">
    <text evidence="2">Involved in the biosynthesis of epothilones, macrolactones which have a narrow anti-fungal spectrum and microtubule-stabilizing activity. Catalyzes the epoxidation of epothilones C and D to epothilones A and B, respectively.</text>
</comment>
<comment type="catalytic activity">
    <reaction evidence="2">
        <text>epothilone C + 2 reduced [2Fe-2S]-[ferredoxin] + O2 + 2 H(+) = epothilone A + 2 oxidized [2Fe-2S]-[ferredoxin] + H2O</text>
        <dbReference type="Rhea" id="RHEA:47804"/>
        <dbReference type="Rhea" id="RHEA-COMP:10000"/>
        <dbReference type="Rhea" id="RHEA-COMP:10001"/>
        <dbReference type="ChEBI" id="CHEBI:15377"/>
        <dbReference type="ChEBI" id="CHEBI:15378"/>
        <dbReference type="ChEBI" id="CHEBI:15379"/>
        <dbReference type="ChEBI" id="CHEBI:31549"/>
        <dbReference type="ChEBI" id="CHEBI:33737"/>
        <dbReference type="ChEBI" id="CHEBI:33738"/>
        <dbReference type="ChEBI" id="CHEBI:80029"/>
    </reaction>
</comment>
<comment type="catalytic activity">
    <reaction evidence="2">
        <text>epothilone D + 2 reduced [2Fe-2S]-[ferredoxin] + O2 + 2 H(+) = epothilone B + 2 oxidized [2Fe-2S]-[ferredoxin] + H2O</text>
        <dbReference type="Rhea" id="RHEA:47808"/>
        <dbReference type="Rhea" id="RHEA-COMP:10000"/>
        <dbReference type="Rhea" id="RHEA-COMP:10001"/>
        <dbReference type="ChEBI" id="CHEBI:15377"/>
        <dbReference type="ChEBI" id="CHEBI:15378"/>
        <dbReference type="ChEBI" id="CHEBI:15379"/>
        <dbReference type="ChEBI" id="CHEBI:29579"/>
        <dbReference type="ChEBI" id="CHEBI:31550"/>
        <dbReference type="ChEBI" id="CHEBI:33737"/>
        <dbReference type="ChEBI" id="CHEBI:33738"/>
    </reaction>
</comment>
<comment type="cofactor">
    <cofactor evidence="3">
        <name>heme</name>
        <dbReference type="ChEBI" id="CHEBI:30413"/>
    </cofactor>
</comment>
<comment type="pathway">
    <text evidence="2">Secondary metabolite biosynthesis; epothilone biosynthesis.</text>
</comment>
<comment type="similarity">
    <text evidence="1 6">Belongs to the cytochrome P450 family.</text>
</comment>
<sequence length="419" mass="46750">MTQEQANQSETKPAFDFKPFAPGYAEDPFPAIERLREATPIFYWDEGRSWVLTRYHDVSAVFRDERFAVSREEWESSAEYSSAIPELSDMKKYGLFGLPPEDHARVRKLVNPSFTSRAIDLLRAEIQRTVDQLLDARSGQEEFDVVRDYAEGIPMRAISALLKVPAECDEKFRRFGSATARALGVGLVPRVDEETKTLVASVTEGLALLHGVLDERRRNPLENDVLTMLLQAEADGSRLSTKELVALVGAIIAAGTDTTIYLIAFAVLNLLRSPEALELVKAEPGLMRNALDEVLRFDNILRIGTVRFARQDLEYCGASIKKGEMVFLLIPSALRDGTVFSRPDVFDVRRDTSASLAYGRGPHVCPGVSLARLEAEIAVGTIFRRFPEMKLKETPVFGYHPAFRNIESLNVILKPSKAG</sequence>
<accession>Q9KIZ4</accession>
<accession>Q9L8C4</accession>
<reference evidence="7" key="1">
    <citation type="journal article" date="2000" name="Chem. Biol.">
        <title>The biosynthetic gene cluster for the microtubule-stabilizing agents epothilones A and B from Sorangium cellulosum So ce90.</title>
        <authorList>
            <person name="Molnar I."/>
            <person name="Schupp T."/>
            <person name="Ono M."/>
            <person name="Zirkle R.E."/>
            <person name="Milnamow M."/>
            <person name="Nowak-Thompson B."/>
            <person name="Engel N."/>
            <person name="Toupet C."/>
            <person name="Stratmann A."/>
            <person name="Cyr D.D."/>
            <person name="Gorlach J."/>
            <person name="Mayo J.M."/>
            <person name="Hu A."/>
            <person name="Goff S."/>
            <person name="Schmid J."/>
            <person name="Ligon J.M."/>
        </authorList>
    </citation>
    <scope>NUCLEOTIDE SEQUENCE [GENOMIC DNA]</scope>
    <source>
        <strain>So ce90</strain>
    </source>
</reference>
<reference key="2">
    <citation type="journal article" date="2000" name="Gene">
        <title>Isolation and characterization of the epothilone biosynthetic gene cluster from Sorangium cellulosum.</title>
        <authorList>
            <person name="Julien B."/>
            <person name="Shah S."/>
            <person name="Ziermann R."/>
            <person name="Goldman R."/>
            <person name="Katz L."/>
            <person name="Khosla C."/>
        </authorList>
    </citation>
    <scope>NUCLEOTIDE SEQUENCE [GENOMIC DNA]</scope>
    <scope>FUNCTION</scope>
    <scope>CATALYTIC ACTIVITY</scope>
    <scope>PATHWAY</scope>
    <source>
        <strain evidence="8">SMP44</strain>
    </source>
</reference>
<reference evidence="8" key="3">
    <citation type="journal article" date="2000" name="Science">
        <title>Cloning and heterologous expression of the epothilone gene cluster.</title>
        <authorList>
            <person name="Tang L."/>
            <person name="Shah S."/>
            <person name="Chung L."/>
            <person name="Carney J."/>
            <person name="Katz L."/>
            <person name="Khosla C."/>
            <person name="Julien B."/>
        </authorList>
    </citation>
    <scope>NUCLEOTIDE SEQUENCE [GENOMIC DNA]</scope>
    <source>
        <strain evidence="8">SMP44</strain>
    </source>
</reference>
<reference evidence="6" key="4">
    <citation type="journal article" date="2003" name="J. Biol. Chem.">
        <title>Crystal structures of epothilone D-bound, epothilone B-bound, and substrate-free forms of cytochrome P450epoK.</title>
        <authorList>
            <person name="Nagano S."/>
            <person name="Li H."/>
            <person name="Shimizu H."/>
            <person name="Nishida C."/>
            <person name="Ogura H."/>
            <person name="Ortiz De Montellano P.R."/>
            <person name="Poulos T.L."/>
        </authorList>
    </citation>
    <scope>X-RAY CRYSTALLOGRAPHY (1.93 ANGSTROMS) IN COMPLEXES WITH HEME; EPOTHILONE D AND EPOTHILONE B</scope>
    <scope>COFACTOR</scope>
</reference>
<organism evidence="8">
    <name type="scientific">Sorangium cellulosum</name>
    <name type="common">Polyangium cellulosum</name>
    <dbReference type="NCBI Taxonomy" id="56"/>
    <lineage>
        <taxon>Bacteria</taxon>
        <taxon>Pseudomonadati</taxon>
        <taxon>Myxococcota</taxon>
        <taxon>Polyangia</taxon>
        <taxon>Polyangiales</taxon>
        <taxon>Polyangiaceae</taxon>
        <taxon>Sorangium</taxon>
    </lineage>
</organism>
<protein>
    <recommendedName>
        <fullName evidence="4">Epothilone C/D epoxidase</fullName>
        <ecNumber evidence="2">1.14.15.-</ecNumber>
    </recommendedName>
    <alternativeName>
        <fullName>Cytochrome P450 167A1</fullName>
    </alternativeName>
    <alternativeName>
        <fullName evidence="5">Cytochrome P450epoK</fullName>
    </alternativeName>
</protein>
<gene>
    <name type="primary">cyp167A1</name>
    <name type="synonym">epoF</name>
    <name type="synonym">epoK</name>
</gene>
<proteinExistence type="evidence at protein level"/>
<feature type="chain" id="PRO_0000052241" description="Epothilone C/D epoxidase">
    <location>
        <begin position="1"/>
        <end position="419"/>
    </location>
</feature>
<feature type="binding site" evidence="3">
    <location>
        <position position="180"/>
    </location>
    <ligand>
        <name>substrate</name>
    </ligand>
</feature>
<feature type="binding site" evidence="3">
    <location>
        <position position="304"/>
    </location>
    <ligand>
        <name>substrate</name>
    </ligand>
</feature>
<feature type="binding site" description="axial binding residue" evidence="3">
    <location>
        <position position="365"/>
    </location>
    <ligand>
        <name>heme</name>
        <dbReference type="ChEBI" id="CHEBI:30413"/>
    </ligand>
    <ligandPart>
        <name>Fe</name>
        <dbReference type="ChEBI" id="CHEBI:18248"/>
    </ligandPart>
</feature>
<feature type="sequence conflict" description="In Ref. 1; AAF26924." evidence="6" ref="1">
    <original>R</original>
    <variation>Q</variation>
    <location>
        <position position="190"/>
    </location>
</feature>
<feature type="sequence conflict" description="In Ref. 1; AAF26924." evidence="6" ref="1">
    <original>G</original>
    <variation>D</variation>
    <location>
        <position position="211"/>
    </location>
</feature>
<feature type="sequence conflict" description="In Ref. 1; AAF26924." evidence="6" ref="1">
    <original>S</original>
    <variation>G</variation>
    <location>
        <position position="353"/>
    </location>
</feature>
<feature type="turn" evidence="10">
    <location>
        <begin position="22"/>
        <end position="26"/>
    </location>
</feature>
<feature type="helix" evidence="10">
    <location>
        <begin position="29"/>
        <end position="38"/>
    </location>
</feature>
<feature type="strand" evidence="10">
    <location>
        <begin position="40"/>
        <end position="44"/>
    </location>
</feature>
<feature type="turn" evidence="10">
    <location>
        <begin position="45"/>
        <end position="48"/>
    </location>
</feature>
<feature type="strand" evidence="10">
    <location>
        <begin position="49"/>
        <end position="52"/>
    </location>
</feature>
<feature type="helix" evidence="10">
    <location>
        <begin position="55"/>
        <end position="62"/>
    </location>
</feature>
<feature type="helix" evidence="10">
    <location>
        <begin position="71"/>
        <end position="73"/>
    </location>
</feature>
<feature type="helix" evidence="10">
    <location>
        <begin position="77"/>
        <end position="82"/>
    </location>
</feature>
<feature type="helix" evidence="10">
    <location>
        <begin position="85"/>
        <end position="87"/>
    </location>
</feature>
<feature type="helix" evidence="10">
    <location>
        <begin position="88"/>
        <end position="93"/>
    </location>
</feature>
<feature type="turn" evidence="10">
    <location>
        <begin position="95"/>
        <end position="97"/>
    </location>
</feature>
<feature type="helix" evidence="10">
    <location>
        <begin position="100"/>
        <end position="110"/>
    </location>
</feature>
<feature type="helix" evidence="10">
    <location>
        <begin position="111"/>
        <end position="114"/>
    </location>
</feature>
<feature type="helix" evidence="10">
    <location>
        <begin position="116"/>
        <end position="119"/>
    </location>
</feature>
<feature type="helix" evidence="10">
    <location>
        <begin position="120"/>
        <end position="122"/>
    </location>
</feature>
<feature type="helix" evidence="10">
    <location>
        <begin position="123"/>
        <end position="137"/>
    </location>
</feature>
<feature type="turn" evidence="10">
    <location>
        <begin position="145"/>
        <end position="149"/>
    </location>
</feature>
<feature type="helix" evidence="10">
    <location>
        <begin position="150"/>
        <end position="152"/>
    </location>
</feature>
<feature type="helix" evidence="10">
    <location>
        <begin position="154"/>
        <end position="161"/>
    </location>
</feature>
<feature type="helix" evidence="10">
    <location>
        <begin position="166"/>
        <end position="168"/>
    </location>
</feature>
<feature type="helix" evidence="10">
    <location>
        <begin position="169"/>
        <end position="182"/>
    </location>
</feature>
<feature type="turn" evidence="10">
    <location>
        <begin position="183"/>
        <end position="187"/>
    </location>
</feature>
<feature type="helix" evidence="10">
    <location>
        <begin position="195"/>
        <end position="218"/>
    </location>
</feature>
<feature type="helix" evidence="10">
    <location>
        <begin position="225"/>
        <end position="234"/>
    </location>
</feature>
<feature type="strand" evidence="9">
    <location>
        <begin position="235"/>
        <end position="238"/>
    </location>
</feature>
<feature type="helix" evidence="10">
    <location>
        <begin position="241"/>
        <end position="255"/>
    </location>
</feature>
<feature type="helix" evidence="10">
    <location>
        <begin position="257"/>
        <end position="272"/>
    </location>
</feature>
<feature type="helix" evidence="10">
    <location>
        <begin position="274"/>
        <end position="282"/>
    </location>
</feature>
<feature type="helix" evidence="10">
    <location>
        <begin position="284"/>
        <end position="286"/>
    </location>
</feature>
<feature type="helix" evidence="10">
    <location>
        <begin position="287"/>
        <end position="297"/>
    </location>
</feature>
<feature type="strand" evidence="10">
    <location>
        <begin position="300"/>
        <end position="311"/>
    </location>
</feature>
<feature type="strand" evidence="10">
    <location>
        <begin position="313"/>
        <end position="315"/>
    </location>
</feature>
<feature type="strand" evidence="10">
    <location>
        <begin position="318"/>
        <end position="320"/>
    </location>
</feature>
<feature type="strand" evidence="10">
    <location>
        <begin position="325"/>
        <end position="329"/>
    </location>
</feature>
<feature type="helix" evidence="10">
    <location>
        <begin position="330"/>
        <end position="333"/>
    </location>
</feature>
<feature type="turn" evidence="10">
    <location>
        <begin position="337"/>
        <end position="339"/>
    </location>
</feature>
<feature type="strand" evidence="10">
    <location>
        <begin position="340"/>
        <end position="342"/>
    </location>
</feature>
<feature type="helix" evidence="10">
    <location>
        <begin position="361"/>
        <end position="363"/>
    </location>
</feature>
<feature type="helix" evidence="10">
    <location>
        <begin position="368"/>
        <end position="385"/>
    </location>
</feature>
<feature type="strand" evidence="10">
    <location>
        <begin position="401"/>
        <end position="403"/>
    </location>
</feature>
<feature type="strand" evidence="10">
    <location>
        <begin position="406"/>
        <end position="408"/>
    </location>
</feature>
<feature type="strand" evidence="10">
    <location>
        <begin position="410"/>
        <end position="414"/>
    </location>
</feature>